<protein>
    <recommendedName>
        <fullName>Eukaryotic peptide chain release factor subunit 1</fullName>
        <shortName>Eukaryotic release factor 1</shortName>
        <shortName>eRF1</shortName>
    </recommendedName>
</protein>
<keyword id="KW-0963">Cytoplasm</keyword>
<keyword id="KW-0648">Protein biosynthesis</keyword>
<feature type="chain" id="PRO_0000143149" description="Eukaryotic peptide chain release factor subunit 1">
    <location>
        <begin position="1"/>
        <end position="429"/>
    </location>
</feature>
<evidence type="ECO:0000250" key="1"/>
<evidence type="ECO:0000305" key="2"/>
<sequence>MSDNDTNVKQWKVRRLIATLEAARGNGTSMISLVIKPKDEISRISKMLADEYGTASNIKSRVNRLSVLSAITSTQQRLKLYNRTPQNGLVVYCGTLITEDGKEKKVNIDFEPFKPINTSLYLCDNKFHVDALKELLETDDKFGFIIVDGNGALYGVVQGSSREVLLRFNVDLPKKHGRGGQSALRFARLRMEKRHNYLRKVAETATTMFITNDQVNVAALILAGSADFKNELAQSDIFDQRLASKILKIVDVSYGGDNGFNQAIELSSDALQNVKFVQEKKLITKFFDEVAQDTGKYVYGINETLQALEMGAIELLIVWENLETKRMVVKNPSTGEEKVFLNSPTEQHDESKFKDPETGAELDVIEILPLTEWLVNTYQNYGAQLEFVTNKSQEGNQFQKGFGGFGGILRYKVDFQDYAVVEDDLDEFI</sequence>
<dbReference type="EMBL" id="AAEL01000357">
    <property type="protein sequence ID" value="EAL35628.1"/>
    <property type="molecule type" value="Genomic_DNA"/>
</dbReference>
<dbReference type="RefSeq" id="XP_665860.1">
    <property type="nucleotide sequence ID" value="XM_660768.1"/>
</dbReference>
<dbReference type="SMR" id="Q5CG95"/>
<dbReference type="GeneID" id="3413843"/>
<dbReference type="KEGG" id="cho:Chro.60391"/>
<dbReference type="VEuPathDB" id="CryptoDB:Chro.60391"/>
<dbReference type="VEuPathDB" id="CryptoDB:ChTU502y2012_415g0180"/>
<dbReference type="VEuPathDB" id="CryptoDB:CHUDEA6_3380"/>
<dbReference type="VEuPathDB" id="CryptoDB:GY17_00000350"/>
<dbReference type="GO" id="GO:0005737">
    <property type="term" value="C:cytoplasm"/>
    <property type="evidence" value="ECO:0007669"/>
    <property type="project" value="UniProtKB-SubCell"/>
</dbReference>
<dbReference type="GO" id="GO:0003747">
    <property type="term" value="F:translation release factor activity"/>
    <property type="evidence" value="ECO:0007669"/>
    <property type="project" value="InterPro"/>
</dbReference>
<dbReference type="FunFam" id="3.30.420.60:FF:000001">
    <property type="entry name" value="Eukaryotic peptide chain release factor subunit 1"/>
    <property type="match status" value="1"/>
</dbReference>
<dbReference type="FunFam" id="3.30.960.10:FF:000001">
    <property type="entry name" value="Eukaryotic peptide chain release factor subunit 1"/>
    <property type="match status" value="1"/>
</dbReference>
<dbReference type="FunFam" id="3.30.1330.30:FF:000006">
    <property type="entry name" value="Peptide chain release factor subunit 1"/>
    <property type="match status" value="1"/>
</dbReference>
<dbReference type="Gene3D" id="3.30.1330.30">
    <property type="match status" value="1"/>
</dbReference>
<dbReference type="Gene3D" id="3.30.960.10">
    <property type="entry name" value="eRF1 domain 1"/>
    <property type="match status" value="1"/>
</dbReference>
<dbReference type="Gene3D" id="3.30.420.60">
    <property type="entry name" value="eRF1 domain 2"/>
    <property type="match status" value="1"/>
</dbReference>
<dbReference type="InterPro" id="IPR042226">
    <property type="entry name" value="eFR1_2_sf"/>
</dbReference>
<dbReference type="InterPro" id="IPR005140">
    <property type="entry name" value="eRF1_1_Pelota"/>
</dbReference>
<dbReference type="InterPro" id="IPR024049">
    <property type="entry name" value="eRF1_1_sf"/>
</dbReference>
<dbReference type="InterPro" id="IPR005141">
    <property type="entry name" value="eRF1_2"/>
</dbReference>
<dbReference type="InterPro" id="IPR005142">
    <property type="entry name" value="eRF1_3"/>
</dbReference>
<dbReference type="InterPro" id="IPR004403">
    <property type="entry name" value="Peptide_chain-rel_eRF1/aRF1"/>
</dbReference>
<dbReference type="InterPro" id="IPR029064">
    <property type="entry name" value="Ribosomal_eL30-like_sf"/>
</dbReference>
<dbReference type="NCBIfam" id="TIGR03676">
    <property type="entry name" value="aRF1_eRF1"/>
    <property type="match status" value="1"/>
</dbReference>
<dbReference type="PANTHER" id="PTHR10113">
    <property type="entry name" value="PEPTIDE CHAIN RELEASE FACTOR SUBUNIT 1"/>
    <property type="match status" value="1"/>
</dbReference>
<dbReference type="Pfam" id="PF03463">
    <property type="entry name" value="eRF1_1"/>
    <property type="match status" value="1"/>
</dbReference>
<dbReference type="Pfam" id="PF03464">
    <property type="entry name" value="eRF1_2"/>
    <property type="match status" value="1"/>
</dbReference>
<dbReference type="Pfam" id="PF03465">
    <property type="entry name" value="eRF1_3"/>
    <property type="match status" value="1"/>
</dbReference>
<dbReference type="SMART" id="SM01194">
    <property type="entry name" value="eRF1_1"/>
    <property type="match status" value="1"/>
</dbReference>
<dbReference type="SUPFAM" id="SSF55315">
    <property type="entry name" value="L30e-like"/>
    <property type="match status" value="1"/>
</dbReference>
<dbReference type="SUPFAM" id="SSF55481">
    <property type="entry name" value="N-terminal domain of eukaryotic peptide chain release factor subunit 1, ERF1"/>
    <property type="match status" value="1"/>
</dbReference>
<dbReference type="SUPFAM" id="SSF53137">
    <property type="entry name" value="Translational machinery components"/>
    <property type="match status" value="1"/>
</dbReference>
<reference key="1">
    <citation type="journal article" date="2004" name="Nature">
        <title>The genome of Cryptosporidium hominis.</title>
        <authorList>
            <person name="Xu P."/>
            <person name="Widmer G."/>
            <person name="Wang Y."/>
            <person name="Ozaki L.S."/>
            <person name="Alves J.M."/>
            <person name="Serrano M.G."/>
            <person name="Puiu D."/>
            <person name="Manque P."/>
            <person name="Akiyoshi D."/>
            <person name="Mackey A.J."/>
            <person name="Pearson W.R."/>
            <person name="Dear P.H."/>
            <person name="Bankier A.T."/>
            <person name="Peterson D.L."/>
            <person name="Abrahamsen M.S."/>
            <person name="Kapur V."/>
            <person name="Tzipori S."/>
            <person name="Buck G.A."/>
        </authorList>
    </citation>
    <scope>NUCLEOTIDE SEQUENCE [LARGE SCALE GENOMIC DNA]</scope>
    <source>
        <strain>TU502</strain>
    </source>
</reference>
<organism>
    <name type="scientific">Cryptosporidium hominis</name>
    <dbReference type="NCBI Taxonomy" id="237895"/>
    <lineage>
        <taxon>Eukaryota</taxon>
        <taxon>Sar</taxon>
        <taxon>Alveolata</taxon>
        <taxon>Apicomplexa</taxon>
        <taxon>Conoidasida</taxon>
        <taxon>Coccidia</taxon>
        <taxon>Eucoccidiorida</taxon>
        <taxon>Eimeriorina</taxon>
        <taxon>Cryptosporidiidae</taxon>
        <taxon>Cryptosporidium</taxon>
    </lineage>
</organism>
<accession>Q5CG95</accession>
<comment type="function">
    <text evidence="1">Directs the termination of nascent peptide synthesis (translation) in response to the termination codons UAA, UAG and UGA.</text>
</comment>
<comment type="subunit">
    <text evidence="1">Heterodimer of two subunits, one of which binds GTP.</text>
</comment>
<comment type="subcellular location">
    <subcellularLocation>
        <location evidence="1">Cytoplasm</location>
    </subcellularLocation>
</comment>
<comment type="similarity">
    <text evidence="2">Belongs to the eukaryotic release factor 1 family.</text>
</comment>
<gene>
    <name type="primary">erf1</name>
    <name type="ORF">Chro.60391</name>
</gene>
<name>ERF1_CRYHO</name>
<proteinExistence type="inferred from homology"/>